<gene>
    <name evidence="1" type="primary">lpxK</name>
    <name type="ordered locus">PSHAa1660</name>
</gene>
<dbReference type="EC" id="2.7.1.130" evidence="1"/>
<dbReference type="EMBL" id="CR954246">
    <property type="protein sequence ID" value="CAI86733.1"/>
    <property type="molecule type" value="Genomic_DNA"/>
</dbReference>
<dbReference type="SMR" id="Q3IGX6"/>
<dbReference type="STRING" id="326442.PSHAa1660"/>
<dbReference type="KEGG" id="pha:PSHAa1660"/>
<dbReference type="PATRIC" id="fig|326442.8.peg.1605"/>
<dbReference type="eggNOG" id="COG1663">
    <property type="taxonomic scope" value="Bacteria"/>
</dbReference>
<dbReference type="HOGENOM" id="CLU_038816_2_0_6"/>
<dbReference type="BioCyc" id="PHAL326442:PSHA_RS08135-MONOMER"/>
<dbReference type="UniPathway" id="UPA00359">
    <property type="reaction ID" value="UER00482"/>
</dbReference>
<dbReference type="Proteomes" id="UP000006843">
    <property type="component" value="Chromosome I"/>
</dbReference>
<dbReference type="GO" id="GO:0005886">
    <property type="term" value="C:plasma membrane"/>
    <property type="evidence" value="ECO:0007669"/>
    <property type="project" value="TreeGrafter"/>
</dbReference>
<dbReference type="GO" id="GO:0005524">
    <property type="term" value="F:ATP binding"/>
    <property type="evidence" value="ECO:0007669"/>
    <property type="project" value="UniProtKB-UniRule"/>
</dbReference>
<dbReference type="GO" id="GO:0009029">
    <property type="term" value="F:tetraacyldisaccharide 4'-kinase activity"/>
    <property type="evidence" value="ECO:0007669"/>
    <property type="project" value="UniProtKB-UniRule"/>
</dbReference>
<dbReference type="GO" id="GO:0009245">
    <property type="term" value="P:lipid A biosynthetic process"/>
    <property type="evidence" value="ECO:0007669"/>
    <property type="project" value="UniProtKB-UniRule"/>
</dbReference>
<dbReference type="GO" id="GO:0009244">
    <property type="term" value="P:lipopolysaccharide core region biosynthetic process"/>
    <property type="evidence" value="ECO:0007669"/>
    <property type="project" value="TreeGrafter"/>
</dbReference>
<dbReference type="HAMAP" id="MF_00409">
    <property type="entry name" value="LpxK"/>
    <property type="match status" value="1"/>
</dbReference>
<dbReference type="InterPro" id="IPR003758">
    <property type="entry name" value="LpxK"/>
</dbReference>
<dbReference type="InterPro" id="IPR027417">
    <property type="entry name" value="P-loop_NTPase"/>
</dbReference>
<dbReference type="NCBIfam" id="TIGR00682">
    <property type="entry name" value="lpxK"/>
    <property type="match status" value="1"/>
</dbReference>
<dbReference type="PANTHER" id="PTHR42724">
    <property type="entry name" value="TETRAACYLDISACCHARIDE 4'-KINASE"/>
    <property type="match status" value="1"/>
</dbReference>
<dbReference type="PANTHER" id="PTHR42724:SF1">
    <property type="entry name" value="TETRAACYLDISACCHARIDE 4'-KINASE, MITOCHONDRIAL-RELATED"/>
    <property type="match status" value="1"/>
</dbReference>
<dbReference type="Pfam" id="PF02606">
    <property type="entry name" value="LpxK"/>
    <property type="match status" value="1"/>
</dbReference>
<dbReference type="SUPFAM" id="SSF52540">
    <property type="entry name" value="P-loop containing nucleoside triphosphate hydrolases"/>
    <property type="match status" value="1"/>
</dbReference>
<accession>Q3IGX6</accession>
<sequence>MSKIEQSWYQPVSLITILLLPLAALFWLISTLRKWLYTCGILTQFSSKTPVIVVGNISVGGNGKTPFVLWLHAHLTQQGLSVGIISRGYGGHAKQYPLLVDHNSTTLEAGDEPILLYHRLQCPIAVGPNRQQNIELLEQTSAIDVIISDDGMQHYKMARSIECCIVDSARQFGNGLLMPAGPLRETKKRLKSVDLVIENGGNNPQRYNLQPAALKSVLNNSTLTEPILTAHAVSAIGNPLRFEQSLQAQGITLVSTHHYRDHYAYTADDFTQFGDENVLMTEKDAVKCSAFAKQNWYYLPVDAQPTDSVINKLNSLLKDKGILNGL</sequence>
<comment type="function">
    <text evidence="1">Transfers the gamma-phosphate of ATP to the 4'-position of a tetraacyldisaccharide 1-phosphate intermediate (termed DS-1-P) to form tetraacyldisaccharide 1,4'-bis-phosphate (lipid IVA).</text>
</comment>
<comment type="catalytic activity">
    <reaction evidence="1">
        <text>a lipid A disaccharide + ATP = a lipid IVA + ADP + H(+)</text>
        <dbReference type="Rhea" id="RHEA:67840"/>
        <dbReference type="ChEBI" id="CHEBI:15378"/>
        <dbReference type="ChEBI" id="CHEBI:30616"/>
        <dbReference type="ChEBI" id="CHEBI:176343"/>
        <dbReference type="ChEBI" id="CHEBI:176425"/>
        <dbReference type="ChEBI" id="CHEBI:456216"/>
        <dbReference type="EC" id="2.7.1.130"/>
    </reaction>
</comment>
<comment type="pathway">
    <text evidence="1">Glycolipid biosynthesis; lipid IV(A) biosynthesis; lipid IV(A) from (3R)-3-hydroxytetradecanoyl-[acyl-carrier-protein] and UDP-N-acetyl-alpha-D-glucosamine: step 6/6.</text>
</comment>
<comment type="similarity">
    <text evidence="1">Belongs to the LpxK family.</text>
</comment>
<feature type="chain" id="PRO_0000229968" description="Tetraacyldisaccharide 4'-kinase">
    <location>
        <begin position="1"/>
        <end position="326"/>
    </location>
</feature>
<feature type="binding site" evidence="1">
    <location>
        <begin position="58"/>
        <end position="65"/>
    </location>
    <ligand>
        <name>ATP</name>
        <dbReference type="ChEBI" id="CHEBI:30616"/>
    </ligand>
</feature>
<evidence type="ECO:0000255" key="1">
    <source>
        <dbReference type="HAMAP-Rule" id="MF_00409"/>
    </source>
</evidence>
<name>LPXK_PSET1</name>
<keyword id="KW-0067">ATP-binding</keyword>
<keyword id="KW-0418">Kinase</keyword>
<keyword id="KW-0441">Lipid A biosynthesis</keyword>
<keyword id="KW-0444">Lipid biosynthesis</keyword>
<keyword id="KW-0443">Lipid metabolism</keyword>
<keyword id="KW-0547">Nucleotide-binding</keyword>
<keyword id="KW-1185">Reference proteome</keyword>
<keyword id="KW-0808">Transferase</keyword>
<proteinExistence type="inferred from homology"/>
<reference key="1">
    <citation type="journal article" date="2005" name="Genome Res.">
        <title>Coping with cold: the genome of the versatile marine Antarctica bacterium Pseudoalteromonas haloplanktis TAC125.</title>
        <authorList>
            <person name="Medigue C."/>
            <person name="Krin E."/>
            <person name="Pascal G."/>
            <person name="Barbe V."/>
            <person name="Bernsel A."/>
            <person name="Bertin P.N."/>
            <person name="Cheung F."/>
            <person name="Cruveiller S."/>
            <person name="D'Amico S."/>
            <person name="Duilio A."/>
            <person name="Fang G."/>
            <person name="Feller G."/>
            <person name="Ho C."/>
            <person name="Mangenot S."/>
            <person name="Marino G."/>
            <person name="Nilsson J."/>
            <person name="Parrilli E."/>
            <person name="Rocha E.P.C."/>
            <person name="Rouy Z."/>
            <person name="Sekowska A."/>
            <person name="Tutino M.L."/>
            <person name="Vallenet D."/>
            <person name="von Heijne G."/>
            <person name="Danchin A."/>
        </authorList>
    </citation>
    <scope>NUCLEOTIDE SEQUENCE [LARGE SCALE GENOMIC DNA]</scope>
    <source>
        <strain>TAC 125</strain>
    </source>
</reference>
<organism>
    <name type="scientific">Pseudoalteromonas translucida (strain TAC 125)</name>
    <dbReference type="NCBI Taxonomy" id="326442"/>
    <lineage>
        <taxon>Bacteria</taxon>
        <taxon>Pseudomonadati</taxon>
        <taxon>Pseudomonadota</taxon>
        <taxon>Gammaproteobacteria</taxon>
        <taxon>Alteromonadales</taxon>
        <taxon>Pseudoalteromonadaceae</taxon>
        <taxon>Pseudoalteromonas</taxon>
    </lineage>
</organism>
<protein>
    <recommendedName>
        <fullName evidence="1">Tetraacyldisaccharide 4'-kinase</fullName>
        <ecNumber evidence="1">2.7.1.130</ecNumber>
    </recommendedName>
    <alternativeName>
        <fullName evidence="1">Lipid A 4'-kinase</fullName>
    </alternativeName>
</protein>